<evidence type="ECO:0000255" key="1">
    <source>
        <dbReference type="HAMAP-Rule" id="MF_00643"/>
    </source>
</evidence>
<evidence type="ECO:0000305" key="2"/>
<dbReference type="EMBL" id="CP000825">
    <property type="protein sequence ID" value="ABV49940.1"/>
    <property type="molecule type" value="Genomic_DNA"/>
</dbReference>
<dbReference type="RefSeq" id="WP_011375863.1">
    <property type="nucleotide sequence ID" value="NC_009840.1"/>
</dbReference>
<dbReference type="STRING" id="93060.P9215_03231"/>
<dbReference type="KEGG" id="pmh:P9215_03231"/>
<dbReference type="eggNOG" id="ENOG50332KX">
    <property type="taxonomic scope" value="Bacteria"/>
</dbReference>
<dbReference type="HOGENOM" id="CLU_211753_1_0_3"/>
<dbReference type="OrthoDB" id="532613at2"/>
<dbReference type="Proteomes" id="UP000002014">
    <property type="component" value="Chromosome"/>
</dbReference>
<dbReference type="GO" id="GO:0009539">
    <property type="term" value="C:photosystem II reaction center"/>
    <property type="evidence" value="ECO:0007669"/>
    <property type="project" value="InterPro"/>
</dbReference>
<dbReference type="GO" id="GO:0031676">
    <property type="term" value="C:plasma membrane-derived thylakoid membrane"/>
    <property type="evidence" value="ECO:0007669"/>
    <property type="project" value="UniProtKB-SubCell"/>
</dbReference>
<dbReference type="GO" id="GO:0009055">
    <property type="term" value="F:electron transfer activity"/>
    <property type="evidence" value="ECO:0007669"/>
    <property type="project" value="UniProtKB-UniRule"/>
</dbReference>
<dbReference type="GO" id="GO:0020037">
    <property type="term" value="F:heme binding"/>
    <property type="evidence" value="ECO:0007669"/>
    <property type="project" value="InterPro"/>
</dbReference>
<dbReference type="GO" id="GO:0005506">
    <property type="term" value="F:iron ion binding"/>
    <property type="evidence" value="ECO:0007669"/>
    <property type="project" value="UniProtKB-UniRule"/>
</dbReference>
<dbReference type="GO" id="GO:0009767">
    <property type="term" value="P:photosynthetic electron transport chain"/>
    <property type="evidence" value="ECO:0007669"/>
    <property type="project" value="InterPro"/>
</dbReference>
<dbReference type="HAMAP" id="MF_00643">
    <property type="entry name" value="PSII_PsbF"/>
    <property type="match status" value="1"/>
</dbReference>
<dbReference type="InterPro" id="IPR006241">
    <property type="entry name" value="PSII_cyt_b559_bsu"/>
</dbReference>
<dbReference type="InterPro" id="IPR006216">
    <property type="entry name" value="PSII_cyt_b559_CS"/>
</dbReference>
<dbReference type="InterPro" id="IPR013081">
    <property type="entry name" value="PSII_cyt_b559_N"/>
</dbReference>
<dbReference type="NCBIfam" id="TIGR01333">
    <property type="entry name" value="cyt_b559_beta"/>
    <property type="match status" value="1"/>
</dbReference>
<dbReference type="Pfam" id="PF00283">
    <property type="entry name" value="Cytochrom_B559"/>
    <property type="match status" value="1"/>
</dbReference>
<dbReference type="PIRSF" id="PIRSF000037">
    <property type="entry name" value="PsbF"/>
    <property type="match status" value="1"/>
</dbReference>
<dbReference type="SUPFAM" id="SSF161045">
    <property type="entry name" value="Cytochrome b559 subunits"/>
    <property type="match status" value="1"/>
</dbReference>
<dbReference type="PROSITE" id="PS00537">
    <property type="entry name" value="CYTOCHROME_B559"/>
    <property type="match status" value="1"/>
</dbReference>
<accession>A8G2V9</accession>
<protein>
    <recommendedName>
        <fullName evidence="1">Cytochrome b559 subunit beta</fullName>
    </recommendedName>
    <alternativeName>
        <fullName evidence="1">PSII reaction center subunit VI</fullName>
    </alternativeName>
</protein>
<comment type="function">
    <text evidence="1">This b-type cytochrome is tightly associated with the reaction center of photosystem II (PSII). PSII is a light-driven water:plastoquinone oxidoreductase that uses light energy to abstract electrons from H(2)O, generating O(2) and a proton gradient subsequently used for ATP formation. It consists of a core antenna complex that captures photons, and an electron transfer chain that converts photonic excitation into a charge separation.</text>
</comment>
<comment type="cofactor">
    <cofactor evidence="1">
        <name>heme b</name>
        <dbReference type="ChEBI" id="CHEBI:60344"/>
    </cofactor>
    <text evidence="1">With its partner (PsbE) binds heme. PSII binds additional chlorophylls, carotenoids and specific lipids.</text>
</comment>
<comment type="subunit">
    <text evidence="2">Heterodimer of an alpha subunit and a beta subunit. PSII is composed of 1 copy each of membrane proteins PsbA, PsbB, PsbC, PsbD, PsbE, PsbF, PsbH, PsbI, PsbJ, PsbK, PsbL, PsbM, PsbT, PsbX, PsbY, Psb30/Ycf12, peripheral proteins PsbO, CyanoQ (PsbQ), PsbU, PsbV and a large number of cofactors. It forms dimeric complexes.</text>
</comment>
<comment type="subcellular location">
    <subcellularLocation>
        <location evidence="1">Cellular thylakoid membrane</location>
        <topology evidence="1">Single-pass membrane protein</topology>
    </subcellularLocation>
</comment>
<comment type="similarity">
    <text evidence="1">Belongs to the PsbE/PsbF family.</text>
</comment>
<reference key="1">
    <citation type="journal article" date="2007" name="PLoS Genet.">
        <title>Patterns and implications of gene gain and loss in the evolution of Prochlorococcus.</title>
        <authorList>
            <person name="Kettler G.C."/>
            <person name="Martiny A.C."/>
            <person name="Huang K."/>
            <person name="Zucker J."/>
            <person name="Coleman M.L."/>
            <person name="Rodrigue S."/>
            <person name="Chen F."/>
            <person name="Lapidus A."/>
            <person name="Ferriera S."/>
            <person name="Johnson J."/>
            <person name="Steglich C."/>
            <person name="Church G.M."/>
            <person name="Richardson P."/>
            <person name="Chisholm S.W."/>
        </authorList>
    </citation>
    <scope>NUCLEOTIDE SEQUENCE [LARGE SCALE GENOMIC DNA]</scope>
    <source>
        <strain>MIT 9215</strain>
    </source>
</reference>
<feature type="chain" id="PRO_1000061455" description="Cytochrome b559 subunit beta">
    <location>
        <begin position="1"/>
        <end position="48"/>
    </location>
</feature>
<feature type="transmembrane region" description="Helical" evidence="1">
    <location>
        <begin position="23"/>
        <end position="39"/>
    </location>
</feature>
<feature type="binding site" description="axial binding residue" evidence="1">
    <location>
        <position position="27"/>
    </location>
    <ligand>
        <name>heme</name>
        <dbReference type="ChEBI" id="CHEBI:30413"/>
        <note>ligand shared with alpha subunit</note>
    </ligand>
    <ligandPart>
        <name>Fe</name>
        <dbReference type="ChEBI" id="CHEBI:18248"/>
    </ligandPart>
</feature>
<proteinExistence type="inferred from homology"/>
<sequence>MTNSQAPMQAAEVRVYPIFTVRWLAVHALAIPSVFFLGSIAAMQFVAR</sequence>
<organism>
    <name type="scientific">Prochlorococcus marinus (strain MIT 9215)</name>
    <dbReference type="NCBI Taxonomy" id="93060"/>
    <lineage>
        <taxon>Bacteria</taxon>
        <taxon>Bacillati</taxon>
        <taxon>Cyanobacteriota</taxon>
        <taxon>Cyanophyceae</taxon>
        <taxon>Synechococcales</taxon>
        <taxon>Prochlorococcaceae</taxon>
        <taxon>Prochlorococcus</taxon>
    </lineage>
</organism>
<gene>
    <name evidence="1" type="primary">psbF</name>
    <name type="ordered locus">P9215_03231</name>
</gene>
<name>PSBF_PROM2</name>
<keyword id="KW-0249">Electron transport</keyword>
<keyword id="KW-0349">Heme</keyword>
<keyword id="KW-0408">Iron</keyword>
<keyword id="KW-0472">Membrane</keyword>
<keyword id="KW-0479">Metal-binding</keyword>
<keyword id="KW-0602">Photosynthesis</keyword>
<keyword id="KW-0604">Photosystem II</keyword>
<keyword id="KW-0793">Thylakoid</keyword>
<keyword id="KW-0812">Transmembrane</keyword>
<keyword id="KW-1133">Transmembrane helix</keyword>
<keyword id="KW-0813">Transport</keyword>